<proteinExistence type="inferred from homology"/>
<keyword id="KW-0028">Amino-acid biosynthesis</keyword>
<keyword id="KW-0963">Cytoplasm</keyword>
<keyword id="KW-0238">DNA-binding</keyword>
<keyword id="KW-0486">Methionine biosynthesis</keyword>
<keyword id="KW-0678">Repressor</keyword>
<keyword id="KW-0804">Transcription</keyword>
<keyword id="KW-0805">Transcription regulation</keyword>
<accession>B4T0U7</accession>
<comment type="function">
    <text evidence="1">This regulatory protein, when combined with SAM (S-adenosylmethionine) represses the expression of the methionine regulon and of enzymes involved in SAM synthesis.</text>
</comment>
<comment type="subunit">
    <text evidence="1">Homodimer.</text>
</comment>
<comment type="subcellular location">
    <subcellularLocation>
        <location evidence="1">Cytoplasm</location>
    </subcellularLocation>
</comment>
<comment type="domain">
    <text>Does not bind DNA by a helix-turn-helix motif.</text>
</comment>
<comment type="similarity">
    <text evidence="1">Belongs to the MetJ family.</text>
</comment>
<sequence>MAEWSGEYISPYAEHGKKSEQVKKITVSIPLKVLKILTDERTRRQVNNLRHATNSELLCEAFLHAFTGQPLPDDADLRKERSDEIPEAAKEIMREMGIDPETWEY</sequence>
<dbReference type="EMBL" id="CP001113">
    <property type="protein sequence ID" value="ACF61156.1"/>
    <property type="molecule type" value="Genomic_DNA"/>
</dbReference>
<dbReference type="RefSeq" id="WP_000852811.1">
    <property type="nucleotide sequence ID" value="NZ_CCMR01000001.1"/>
</dbReference>
<dbReference type="SMR" id="B4T0U7"/>
<dbReference type="GeneID" id="66758351"/>
<dbReference type="KEGG" id="see:SNSL254_A4430"/>
<dbReference type="HOGENOM" id="CLU_142318_0_0_6"/>
<dbReference type="Proteomes" id="UP000008824">
    <property type="component" value="Chromosome"/>
</dbReference>
<dbReference type="GO" id="GO:0005737">
    <property type="term" value="C:cytoplasm"/>
    <property type="evidence" value="ECO:0007669"/>
    <property type="project" value="UniProtKB-SubCell"/>
</dbReference>
<dbReference type="GO" id="GO:0003677">
    <property type="term" value="F:DNA binding"/>
    <property type="evidence" value="ECO:0007669"/>
    <property type="project" value="UniProtKB-KW"/>
</dbReference>
<dbReference type="GO" id="GO:0003700">
    <property type="term" value="F:DNA-binding transcription factor activity"/>
    <property type="evidence" value="ECO:0007669"/>
    <property type="project" value="InterPro"/>
</dbReference>
<dbReference type="GO" id="GO:0009086">
    <property type="term" value="P:methionine biosynthetic process"/>
    <property type="evidence" value="ECO:0007669"/>
    <property type="project" value="UniProtKB-UniRule"/>
</dbReference>
<dbReference type="GO" id="GO:0045892">
    <property type="term" value="P:negative regulation of DNA-templated transcription"/>
    <property type="evidence" value="ECO:0007669"/>
    <property type="project" value="UniProtKB-UniRule"/>
</dbReference>
<dbReference type="CDD" id="cd00490">
    <property type="entry name" value="Met_repressor_MetJ"/>
    <property type="match status" value="1"/>
</dbReference>
<dbReference type="FunFam" id="1.10.140.10:FF:000001">
    <property type="entry name" value="Met repressor"/>
    <property type="match status" value="1"/>
</dbReference>
<dbReference type="Gene3D" id="1.10.140.10">
    <property type="entry name" value="MET Apo-Repressor, subunit A"/>
    <property type="match status" value="1"/>
</dbReference>
<dbReference type="HAMAP" id="MF_00744">
    <property type="entry name" value="MetJ"/>
    <property type="match status" value="1"/>
</dbReference>
<dbReference type="InterPro" id="IPR002084">
    <property type="entry name" value="Met_repressor_MetJ"/>
</dbReference>
<dbReference type="InterPro" id="IPR023453">
    <property type="entry name" value="Met_repressor_MetJ_dom_sf"/>
</dbReference>
<dbReference type="InterPro" id="IPR010985">
    <property type="entry name" value="Ribbon_hlx_hlx"/>
</dbReference>
<dbReference type="NCBIfam" id="NF003622">
    <property type="entry name" value="PRK05264.1"/>
    <property type="match status" value="1"/>
</dbReference>
<dbReference type="Pfam" id="PF01340">
    <property type="entry name" value="MetJ"/>
    <property type="match status" value="1"/>
</dbReference>
<dbReference type="SUPFAM" id="SSF47598">
    <property type="entry name" value="Ribbon-helix-helix"/>
    <property type="match status" value="1"/>
</dbReference>
<organism>
    <name type="scientific">Salmonella newport (strain SL254)</name>
    <dbReference type="NCBI Taxonomy" id="423368"/>
    <lineage>
        <taxon>Bacteria</taxon>
        <taxon>Pseudomonadati</taxon>
        <taxon>Pseudomonadota</taxon>
        <taxon>Gammaproteobacteria</taxon>
        <taxon>Enterobacterales</taxon>
        <taxon>Enterobacteriaceae</taxon>
        <taxon>Salmonella</taxon>
    </lineage>
</organism>
<feature type="chain" id="PRO_1000133220" description="Met repressor">
    <location>
        <begin position="1"/>
        <end position="105"/>
    </location>
</feature>
<evidence type="ECO:0000255" key="1">
    <source>
        <dbReference type="HAMAP-Rule" id="MF_00744"/>
    </source>
</evidence>
<gene>
    <name evidence="1" type="primary">metJ</name>
    <name type="ordered locus">SNSL254_A4430</name>
</gene>
<protein>
    <recommendedName>
        <fullName evidence="1">Met repressor</fullName>
    </recommendedName>
    <alternativeName>
        <fullName evidence="1">Met regulon regulatory protein MetJ</fullName>
    </alternativeName>
</protein>
<reference key="1">
    <citation type="journal article" date="2011" name="J. Bacteriol.">
        <title>Comparative genomics of 28 Salmonella enterica isolates: evidence for CRISPR-mediated adaptive sublineage evolution.</title>
        <authorList>
            <person name="Fricke W.F."/>
            <person name="Mammel M.K."/>
            <person name="McDermott P.F."/>
            <person name="Tartera C."/>
            <person name="White D.G."/>
            <person name="Leclerc J.E."/>
            <person name="Ravel J."/>
            <person name="Cebula T.A."/>
        </authorList>
    </citation>
    <scope>NUCLEOTIDE SEQUENCE [LARGE SCALE GENOMIC DNA]</scope>
    <source>
        <strain>SL254</strain>
    </source>
</reference>
<name>METJ_SALNS</name>